<comment type="function">
    <text evidence="1">Involved in the synthesis of autoinducer 2 (AI-2) which is secreted by bacteria and is used to communicate both the cell density and the metabolic potential of the environment. The regulation of gene expression in response to changes in cell density is called quorum sensing. Catalyzes the transformation of S-ribosylhomocysteine (RHC) to homocysteine (HC) and 4,5-dihydroxy-2,3-pentadione (DPD).</text>
</comment>
<comment type="catalytic activity">
    <reaction evidence="1">
        <text>S-(5-deoxy-D-ribos-5-yl)-L-homocysteine = (S)-4,5-dihydroxypentane-2,3-dione + L-homocysteine</text>
        <dbReference type="Rhea" id="RHEA:17753"/>
        <dbReference type="ChEBI" id="CHEBI:29484"/>
        <dbReference type="ChEBI" id="CHEBI:58195"/>
        <dbReference type="ChEBI" id="CHEBI:58199"/>
        <dbReference type="EC" id="4.4.1.21"/>
    </reaction>
</comment>
<comment type="cofactor">
    <cofactor evidence="1">
        <name>Fe cation</name>
        <dbReference type="ChEBI" id="CHEBI:24875"/>
    </cofactor>
    <text evidence="1">Binds 1 Fe cation per subunit.</text>
</comment>
<comment type="subunit">
    <text evidence="1">Homodimer.</text>
</comment>
<comment type="similarity">
    <text evidence="1">Belongs to the LuxS family.</text>
</comment>
<proteinExistence type="inferred from homology"/>
<reference key="1">
    <citation type="journal article" date="2010" name="J. Bacteriol.">
        <title>Genome sequence of the deep-rooted Yersinia pestis strain Angola reveals new insights into the evolution and pangenome of the plague bacterium.</title>
        <authorList>
            <person name="Eppinger M."/>
            <person name="Worsham P.L."/>
            <person name="Nikolich M.P."/>
            <person name="Riley D.R."/>
            <person name="Sebastian Y."/>
            <person name="Mou S."/>
            <person name="Achtman M."/>
            <person name="Lindler L.E."/>
            <person name="Ravel J."/>
        </authorList>
    </citation>
    <scope>NUCLEOTIDE SEQUENCE [LARGE SCALE GENOMIC DNA]</scope>
    <source>
        <strain>Angola</strain>
    </source>
</reference>
<dbReference type="EC" id="4.4.1.21" evidence="1"/>
<dbReference type="EMBL" id="CP000901">
    <property type="protein sequence ID" value="ABX86355.1"/>
    <property type="molecule type" value="Genomic_DNA"/>
</dbReference>
<dbReference type="RefSeq" id="WP_002209453.1">
    <property type="nucleotide sequence ID" value="NZ_CP009935.1"/>
</dbReference>
<dbReference type="SMR" id="A9R0V3"/>
<dbReference type="GeneID" id="57975413"/>
<dbReference type="KEGG" id="ypg:YpAngola_A0890"/>
<dbReference type="PATRIC" id="fig|349746.12.peg.1842"/>
<dbReference type="GO" id="GO:0005506">
    <property type="term" value="F:iron ion binding"/>
    <property type="evidence" value="ECO:0007669"/>
    <property type="project" value="InterPro"/>
</dbReference>
<dbReference type="GO" id="GO:0043768">
    <property type="term" value="F:S-ribosylhomocysteine lyase activity"/>
    <property type="evidence" value="ECO:0007669"/>
    <property type="project" value="UniProtKB-UniRule"/>
</dbReference>
<dbReference type="GO" id="GO:0009372">
    <property type="term" value="P:quorum sensing"/>
    <property type="evidence" value="ECO:0007669"/>
    <property type="project" value="UniProtKB-UniRule"/>
</dbReference>
<dbReference type="FunFam" id="3.30.1360.80:FF:000001">
    <property type="entry name" value="S-ribosylhomocysteine lyase"/>
    <property type="match status" value="1"/>
</dbReference>
<dbReference type="Gene3D" id="3.30.1360.80">
    <property type="entry name" value="S-ribosylhomocysteinase (LuxS)"/>
    <property type="match status" value="1"/>
</dbReference>
<dbReference type="HAMAP" id="MF_00091">
    <property type="entry name" value="LuxS"/>
    <property type="match status" value="1"/>
</dbReference>
<dbReference type="InterPro" id="IPR037005">
    <property type="entry name" value="LuxS_sf"/>
</dbReference>
<dbReference type="InterPro" id="IPR011249">
    <property type="entry name" value="Metalloenz_LuxS/M16"/>
</dbReference>
<dbReference type="InterPro" id="IPR003815">
    <property type="entry name" value="S-ribosylhomocysteinase"/>
</dbReference>
<dbReference type="NCBIfam" id="NF002602">
    <property type="entry name" value="PRK02260.1-2"/>
    <property type="match status" value="1"/>
</dbReference>
<dbReference type="PANTHER" id="PTHR35799">
    <property type="entry name" value="S-RIBOSYLHOMOCYSTEINE LYASE"/>
    <property type="match status" value="1"/>
</dbReference>
<dbReference type="PANTHER" id="PTHR35799:SF1">
    <property type="entry name" value="S-RIBOSYLHOMOCYSTEINE LYASE"/>
    <property type="match status" value="1"/>
</dbReference>
<dbReference type="Pfam" id="PF02664">
    <property type="entry name" value="LuxS"/>
    <property type="match status" value="1"/>
</dbReference>
<dbReference type="PIRSF" id="PIRSF006160">
    <property type="entry name" value="AI2"/>
    <property type="match status" value="1"/>
</dbReference>
<dbReference type="PRINTS" id="PR01487">
    <property type="entry name" value="LUXSPROTEIN"/>
</dbReference>
<dbReference type="SUPFAM" id="SSF63411">
    <property type="entry name" value="LuxS/MPP-like metallohydrolase"/>
    <property type="match status" value="1"/>
</dbReference>
<accession>A9R0V3</accession>
<gene>
    <name evidence="1" type="primary">luxS</name>
    <name type="ordered locus">YpAngola_A0890</name>
</gene>
<organism>
    <name type="scientific">Yersinia pestis bv. Antiqua (strain Angola)</name>
    <dbReference type="NCBI Taxonomy" id="349746"/>
    <lineage>
        <taxon>Bacteria</taxon>
        <taxon>Pseudomonadati</taxon>
        <taxon>Pseudomonadota</taxon>
        <taxon>Gammaproteobacteria</taxon>
        <taxon>Enterobacterales</taxon>
        <taxon>Yersiniaceae</taxon>
        <taxon>Yersinia</taxon>
    </lineage>
</organism>
<keyword id="KW-0071">Autoinducer synthesis</keyword>
<keyword id="KW-0408">Iron</keyword>
<keyword id="KW-0456">Lyase</keyword>
<keyword id="KW-0479">Metal-binding</keyword>
<keyword id="KW-0673">Quorum sensing</keyword>
<protein>
    <recommendedName>
        <fullName evidence="1">S-ribosylhomocysteine lyase</fullName>
        <ecNumber evidence="1">4.4.1.21</ecNumber>
    </recommendedName>
    <alternativeName>
        <fullName evidence="1">AI-2 synthesis protein</fullName>
    </alternativeName>
    <alternativeName>
        <fullName evidence="1">Autoinducer-2 production protein LuxS</fullName>
    </alternativeName>
</protein>
<evidence type="ECO:0000255" key="1">
    <source>
        <dbReference type="HAMAP-Rule" id="MF_00091"/>
    </source>
</evidence>
<feature type="chain" id="PRO_1000093336" description="S-ribosylhomocysteine lyase">
    <location>
        <begin position="1"/>
        <end position="171"/>
    </location>
</feature>
<feature type="binding site" evidence="1">
    <location>
        <position position="54"/>
    </location>
    <ligand>
        <name>Fe cation</name>
        <dbReference type="ChEBI" id="CHEBI:24875"/>
    </ligand>
</feature>
<feature type="binding site" evidence="1">
    <location>
        <position position="58"/>
    </location>
    <ligand>
        <name>Fe cation</name>
        <dbReference type="ChEBI" id="CHEBI:24875"/>
    </ligand>
</feature>
<feature type="binding site" evidence="1">
    <location>
        <position position="128"/>
    </location>
    <ligand>
        <name>Fe cation</name>
        <dbReference type="ChEBI" id="CHEBI:24875"/>
    </ligand>
</feature>
<name>LUXS_YERPG</name>
<sequence>MPLLDSFTVDHTIMKAPAVRVAKTMKTPHGDEITVFDLRFCVPNKEVMPEKGIHTLEHLFAGFMRDHLNGDGVEIIDISPMGCRTGFYMSLIGTPDEQRVADAWKAAMADVLKVTDQRKIPELNEYQCGTYHMHSLEEAQSIAKDILDRDVRINHNEELALPKEKLTELHI</sequence>